<name>RS10_THEPX</name>
<comment type="function">
    <text evidence="1">Involved in the binding of tRNA to the ribosomes.</text>
</comment>
<comment type="subunit">
    <text evidence="1">Part of the 30S ribosomal subunit.</text>
</comment>
<comment type="similarity">
    <text evidence="1">Belongs to the universal ribosomal protein uS10 family.</text>
</comment>
<feature type="chain" id="PRO_1000127198" description="Small ribosomal subunit protein uS10">
    <location>
        <begin position="1"/>
        <end position="102"/>
    </location>
</feature>
<reference key="1">
    <citation type="submission" date="2008-01" db="EMBL/GenBank/DDBJ databases">
        <title>Complete sequence of Thermoanaerobacter sp. X514.</title>
        <authorList>
            <consortium name="US DOE Joint Genome Institute"/>
            <person name="Copeland A."/>
            <person name="Lucas S."/>
            <person name="Lapidus A."/>
            <person name="Barry K."/>
            <person name="Glavina del Rio T."/>
            <person name="Dalin E."/>
            <person name="Tice H."/>
            <person name="Pitluck S."/>
            <person name="Bruce D."/>
            <person name="Goodwin L."/>
            <person name="Saunders E."/>
            <person name="Brettin T."/>
            <person name="Detter J.C."/>
            <person name="Han C."/>
            <person name="Schmutz J."/>
            <person name="Larimer F."/>
            <person name="Land M."/>
            <person name="Hauser L."/>
            <person name="Kyrpides N."/>
            <person name="Kim E."/>
            <person name="Hemme C."/>
            <person name="Fields M.W."/>
            <person name="He Z."/>
            <person name="Zhou J."/>
            <person name="Richardson P."/>
        </authorList>
    </citation>
    <scope>NUCLEOTIDE SEQUENCE [LARGE SCALE GENOMIC DNA]</scope>
    <source>
        <strain>X514</strain>
    </source>
</reference>
<proteinExistence type="inferred from homology"/>
<organism>
    <name type="scientific">Thermoanaerobacter sp. (strain X514)</name>
    <dbReference type="NCBI Taxonomy" id="399726"/>
    <lineage>
        <taxon>Bacteria</taxon>
        <taxon>Bacillati</taxon>
        <taxon>Bacillota</taxon>
        <taxon>Clostridia</taxon>
        <taxon>Thermoanaerobacterales</taxon>
        <taxon>Thermoanaerobacteraceae</taxon>
        <taxon>Thermoanaerobacter</taxon>
    </lineage>
</organism>
<sequence>MPKQKIRIRLKAFDHAILDQSAQKIVETAKRTGAEVSGPIPLPTEKDIITILRAPHKYKDSREQFEIRTHKRLIDILNPTPKTVDALMRLDLPSGVDIEIKL</sequence>
<protein>
    <recommendedName>
        <fullName evidence="1">Small ribosomal subunit protein uS10</fullName>
    </recommendedName>
    <alternativeName>
        <fullName evidence="2">30S ribosomal protein S10</fullName>
    </alternativeName>
</protein>
<keyword id="KW-0687">Ribonucleoprotein</keyword>
<keyword id="KW-0689">Ribosomal protein</keyword>
<evidence type="ECO:0000255" key="1">
    <source>
        <dbReference type="HAMAP-Rule" id="MF_00508"/>
    </source>
</evidence>
<evidence type="ECO:0000305" key="2"/>
<gene>
    <name evidence="1" type="primary">rpsJ</name>
    <name type="ordered locus">Teth514_0866</name>
</gene>
<dbReference type="EMBL" id="CP000923">
    <property type="protein sequence ID" value="ABY92168.1"/>
    <property type="molecule type" value="Genomic_DNA"/>
</dbReference>
<dbReference type="RefSeq" id="WP_003868559.1">
    <property type="nucleotide sequence ID" value="NC_010320.1"/>
</dbReference>
<dbReference type="SMR" id="B0K5P2"/>
<dbReference type="KEGG" id="tex:Teth514_0866"/>
<dbReference type="HOGENOM" id="CLU_122625_1_3_9"/>
<dbReference type="Proteomes" id="UP000002155">
    <property type="component" value="Chromosome"/>
</dbReference>
<dbReference type="GO" id="GO:1990904">
    <property type="term" value="C:ribonucleoprotein complex"/>
    <property type="evidence" value="ECO:0007669"/>
    <property type="project" value="UniProtKB-KW"/>
</dbReference>
<dbReference type="GO" id="GO:0005840">
    <property type="term" value="C:ribosome"/>
    <property type="evidence" value="ECO:0007669"/>
    <property type="project" value="UniProtKB-KW"/>
</dbReference>
<dbReference type="GO" id="GO:0003735">
    <property type="term" value="F:structural constituent of ribosome"/>
    <property type="evidence" value="ECO:0007669"/>
    <property type="project" value="InterPro"/>
</dbReference>
<dbReference type="GO" id="GO:0000049">
    <property type="term" value="F:tRNA binding"/>
    <property type="evidence" value="ECO:0007669"/>
    <property type="project" value="UniProtKB-UniRule"/>
</dbReference>
<dbReference type="GO" id="GO:0006412">
    <property type="term" value="P:translation"/>
    <property type="evidence" value="ECO:0007669"/>
    <property type="project" value="UniProtKB-UniRule"/>
</dbReference>
<dbReference type="FunFam" id="3.30.70.600:FF:000001">
    <property type="entry name" value="30S ribosomal protein S10"/>
    <property type="match status" value="1"/>
</dbReference>
<dbReference type="Gene3D" id="3.30.70.600">
    <property type="entry name" value="Ribosomal protein S10 domain"/>
    <property type="match status" value="1"/>
</dbReference>
<dbReference type="HAMAP" id="MF_00508">
    <property type="entry name" value="Ribosomal_uS10"/>
    <property type="match status" value="1"/>
</dbReference>
<dbReference type="InterPro" id="IPR001848">
    <property type="entry name" value="Ribosomal_uS10"/>
</dbReference>
<dbReference type="InterPro" id="IPR018268">
    <property type="entry name" value="Ribosomal_uS10_CS"/>
</dbReference>
<dbReference type="InterPro" id="IPR027486">
    <property type="entry name" value="Ribosomal_uS10_dom"/>
</dbReference>
<dbReference type="InterPro" id="IPR036838">
    <property type="entry name" value="Ribosomal_uS10_dom_sf"/>
</dbReference>
<dbReference type="NCBIfam" id="NF001861">
    <property type="entry name" value="PRK00596.1"/>
    <property type="match status" value="1"/>
</dbReference>
<dbReference type="NCBIfam" id="TIGR01049">
    <property type="entry name" value="rpsJ_bact"/>
    <property type="match status" value="1"/>
</dbReference>
<dbReference type="PANTHER" id="PTHR11700">
    <property type="entry name" value="30S RIBOSOMAL PROTEIN S10 FAMILY MEMBER"/>
    <property type="match status" value="1"/>
</dbReference>
<dbReference type="Pfam" id="PF00338">
    <property type="entry name" value="Ribosomal_S10"/>
    <property type="match status" value="1"/>
</dbReference>
<dbReference type="PRINTS" id="PR00971">
    <property type="entry name" value="RIBOSOMALS10"/>
</dbReference>
<dbReference type="SMART" id="SM01403">
    <property type="entry name" value="Ribosomal_S10"/>
    <property type="match status" value="1"/>
</dbReference>
<dbReference type="SUPFAM" id="SSF54999">
    <property type="entry name" value="Ribosomal protein S10"/>
    <property type="match status" value="1"/>
</dbReference>
<dbReference type="PROSITE" id="PS00361">
    <property type="entry name" value="RIBOSOMAL_S10"/>
    <property type="match status" value="1"/>
</dbReference>
<accession>B0K5P2</accession>